<accession>O43325</accession>
<accession>B2R4M5</accession>
<feature type="chain" id="PRO_0000174310" description="LYR motif-containing protein 1">
    <location>
        <begin position="1"/>
        <end position="122"/>
    </location>
</feature>
<protein>
    <recommendedName>
        <fullName>LYR motif-containing protein 1</fullName>
    </recommendedName>
</protein>
<keyword id="KW-0539">Nucleus</keyword>
<keyword id="KW-1267">Proteomics identification</keyword>
<keyword id="KW-1185">Reference proteome</keyword>
<comment type="function">
    <text evidence="1">May promote cell proliferation and inhibition of apoptosis of preadipocytes.</text>
</comment>
<comment type="subcellular location">
    <subcellularLocation>
        <location evidence="1">Nucleus</location>
    </subcellularLocation>
</comment>
<comment type="tissue specificity">
    <text evidence="1">High levels in adipose tissue.</text>
</comment>
<comment type="disease">
    <text>When overexpressed, may be involved in obesity-associated insulin resistance, possibly by causing mitochondrial dysfunction in adipocytes.</text>
</comment>
<comment type="similarity">
    <text evidence="2">Belongs to the complex I LYR family.</text>
</comment>
<evidence type="ECO:0000269" key="1">
    <source>
    </source>
</evidence>
<evidence type="ECO:0000305" key="2"/>
<dbReference type="EMBL" id="AK311881">
    <property type="protein sequence ID" value="BAG34822.1"/>
    <property type="molecule type" value="mRNA"/>
</dbReference>
<dbReference type="EMBL" id="AC002394">
    <property type="protein sequence ID" value="AAC05810.1"/>
    <property type="molecule type" value="Genomic_DNA"/>
</dbReference>
<dbReference type="EMBL" id="CH471228">
    <property type="protein sequence ID" value="EAW66847.1"/>
    <property type="molecule type" value="Genomic_DNA"/>
</dbReference>
<dbReference type="EMBL" id="BC017039">
    <property type="protein sequence ID" value="AAH17039.1"/>
    <property type="molecule type" value="mRNA"/>
</dbReference>
<dbReference type="CCDS" id="CCDS10593.1"/>
<dbReference type="RefSeq" id="NP_001121773.1">
    <property type="nucleotide sequence ID" value="NM_001128301.3"/>
</dbReference>
<dbReference type="RefSeq" id="NP_001121774.1">
    <property type="nucleotide sequence ID" value="NM_001128302.3"/>
</dbReference>
<dbReference type="RefSeq" id="NP_001289764.1">
    <property type="nucleotide sequence ID" value="NM_001302835.2"/>
</dbReference>
<dbReference type="RefSeq" id="NP_001289765.1">
    <property type="nucleotide sequence ID" value="NM_001302836.2"/>
</dbReference>
<dbReference type="RefSeq" id="NP_001356561.1">
    <property type="nucleotide sequence ID" value="NM_001369632.1"/>
</dbReference>
<dbReference type="RefSeq" id="NP_001356562.1">
    <property type="nucleotide sequence ID" value="NM_001369633.1"/>
</dbReference>
<dbReference type="RefSeq" id="NP_001356563.1">
    <property type="nucleotide sequence ID" value="NM_001369634.1"/>
</dbReference>
<dbReference type="RefSeq" id="NP_001356564.1">
    <property type="nucleotide sequence ID" value="NM_001369635.1"/>
</dbReference>
<dbReference type="RefSeq" id="NP_001356565.1">
    <property type="nucleotide sequence ID" value="NM_001369636.1"/>
</dbReference>
<dbReference type="RefSeq" id="NP_001356566.1">
    <property type="nucleotide sequence ID" value="NM_001369637.1"/>
</dbReference>
<dbReference type="RefSeq" id="NP_001356567.1">
    <property type="nucleotide sequence ID" value="NM_001369638.1"/>
</dbReference>
<dbReference type="RefSeq" id="NP_001356568.1">
    <property type="nucleotide sequence ID" value="NM_001369639.1"/>
</dbReference>
<dbReference type="RefSeq" id="NP_001356570.1">
    <property type="nucleotide sequence ID" value="NM_001369641.1"/>
</dbReference>
<dbReference type="RefSeq" id="NP_001356571.1">
    <property type="nucleotide sequence ID" value="NM_001369642.1"/>
</dbReference>
<dbReference type="RefSeq" id="NP_001356573.1">
    <property type="nucleotide sequence ID" value="NM_001369644.1"/>
</dbReference>
<dbReference type="RefSeq" id="NP_001356574.1">
    <property type="nucleotide sequence ID" value="NM_001369645.1"/>
</dbReference>
<dbReference type="RefSeq" id="NP_065157.1">
    <property type="nucleotide sequence ID" value="NM_020424.5"/>
</dbReference>
<dbReference type="RefSeq" id="XP_005255501.1">
    <property type="nucleotide sequence ID" value="XM_005255444.1"/>
</dbReference>
<dbReference type="RefSeq" id="XP_016878968.1">
    <property type="nucleotide sequence ID" value="XM_017023479.1"/>
</dbReference>
<dbReference type="RefSeq" id="XP_016878969.1">
    <property type="nucleotide sequence ID" value="XM_017023480.1"/>
</dbReference>
<dbReference type="RefSeq" id="XP_016878970.1">
    <property type="nucleotide sequence ID" value="XM_017023481.1"/>
</dbReference>
<dbReference type="RefSeq" id="XP_016878971.1">
    <property type="nucleotide sequence ID" value="XM_017023482.1"/>
</dbReference>
<dbReference type="RefSeq" id="XP_047290336.1">
    <property type="nucleotide sequence ID" value="XM_047434380.1"/>
</dbReference>
<dbReference type="RefSeq" id="XP_054169493.1">
    <property type="nucleotide sequence ID" value="XM_054313518.1"/>
</dbReference>
<dbReference type="SMR" id="O43325"/>
<dbReference type="BioGRID" id="121406">
    <property type="interactions" value="11"/>
</dbReference>
<dbReference type="FunCoup" id="O43325">
    <property type="interactions" value="326"/>
</dbReference>
<dbReference type="IntAct" id="O43325">
    <property type="interactions" value="7"/>
</dbReference>
<dbReference type="STRING" id="9606.ENSP00000379367"/>
<dbReference type="iPTMnet" id="O43325"/>
<dbReference type="PhosphoSitePlus" id="O43325"/>
<dbReference type="BioMuta" id="LYRM1"/>
<dbReference type="jPOST" id="O43325"/>
<dbReference type="MassIVE" id="O43325"/>
<dbReference type="PaxDb" id="9606-ENSP00000379367"/>
<dbReference type="PeptideAtlas" id="O43325"/>
<dbReference type="ProteomicsDB" id="48905"/>
<dbReference type="Pumba" id="O43325"/>
<dbReference type="Antibodypedia" id="42976">
    <property type="antibodies" value="78 antibodies from 21 providers"/>
</dbReference>
<dbReference type="DNASU" id="57149"/>
<dbReference type="Ensembl" id="ENST00000219168.8">
    <property type="protein sequence ID" value="ENSP00000219168.4"/>
    <property type="gene ID" value="ENSG00000102897.10"/>
</dbReference>
<dbReference type="Ensembl" id="ENST00000396052.3">
    <property type="protein sequence ID" value="ENSP00000379367.2"/>
    <property type="gene ID" value="ENSG00000102897.10"/>
</dbReference>
<dbReference type="Ensembl" id="ENST00000439021.5">
    <property type="protein sequence ID" value="ENSP00000407883.1"/>
    <property type="gene ID" value="ENSG00000102897.10"/>
</dbReference>
<dbReference type="Ensembl" id="ENST00000567954.6">
    <property type="protein sequence ID" value="ENSP00000457333.1"/>
    <property type="gene ID" value="ENSG00000102897.10"/>
</dbReference>
<dbReference type="Ensembl" id="ENST00000568663.5">
    <property type="protein sequence ID" value="ENSP00000454826.1"/>
    <property type="gene ID" value="ENSG00000102897.10"/>
</dbReference>
<dbReference type="Ensembl" id="ENST00000569023.5">
    <property type="protein sequence ID" value="ENSP00000454551.1"/>
    <property type="gene ID" value="ENSG00000102897.10"/>
</dbReference>
<dbReference type="GeneID" id="57149"/>
<dbReference type="KEGG" id="hsa:57149"/>
<dbReference type="MANE-Select" id="ENST00000567954.6">
    <property type="protein sequence ID" value="ENSP00000457333.1"/>
    <property type="RefSeq nucleotide sequence ID" value="NM_001128302.3"/>
    <property type="RefSeq protein sequence ID" value="NP_001121774.1"/>
</dbReference>
<dbReference type="UCSC" id="uc002dia.6">
    <property type="organism name" value="human"/>
</dbReference>
<dbReference type="AGR" id="HGNC:25074"/>
<dbReference type="CTD" id="57149"/>
<dbReference type="DisGeNET" id="57149"/>
<dbReference type="GeneCards" id="LYRM1"/>
<dbReference type="HGNC" id="HGNC:25074">
    <property type="gene designation" value="LYRM1"/>
</dbReference>
<dbReference type="HPA" id="ENSG00000102897">
    <property type="expression patterns" value="Low tissue specificity"/>
</dbReference>
<dbReference type="MIM" id="614709">
    <property type="type" value="gene"/>
</dbReference>
<dbReference type="neXtProt" id="NX_O43325"/>
<dbReference type="OpenTargets" id="ENSG00000102897"/>
<dbReference type="PharmGKB" id="PA162394735"/>
<dbReference type="VEuPathDB" id="HostDB:ENSG00000102897"/>
<dbReference type="eggNOG" id="ENOG502S1SM">
    <property type="taxonomic scope" value="Eukaryota"/>
</dbReference>
<dbReference type="GeneTree" id="ENSGT00390000006695"/>
<dbReference type="HOGENOM" id="CLU_141097_0_0_1"/>
<dbReference type="InParanoid" id="O43325"/>
<dbReference type="OMA" id="KNWQSAS"/>
<dbReference type="OrthoDB" id="275715at2759"/>
<dbReference type="PAN-GO" id="O43325">
    <property type="GO annotations" value="0 GO annotations based on evolutionary models"/>
</dbReference>
<dbReference type="PhylomeDB" id="O43325"/>
<dbReference type="TreeFam" id="TF324686"/>
<dbReference type="PathwayCommons" id="O43325"/>
<dbReference type="SignaLink" id="O43325"/>
<dbReference type="BioGRID-ORCS" id="57149">
    <property type="hits" value="17 hits in 1168 CRISPR screens"/>
</dbReference>
<dbReference type="ChiTaRS" id="LYRM1">
    <property type="organism name" value="human"/>
</dbReference>
<dbReference type="GenomeRNAi" id="57149"/>
<dbReference type="Pharos" id="O43325">
    <property type="development level" value="Tbio"/>
</dbReference>
<dbReference type="PRO" id="PR:O43325"/>
<dbReference type="Proteomes" id="UP000005640">
    <property type="component" value="Chromosome 16"/>
</dbReference>
<dbReference type="RNAct" id="O43325">
    <property type="molecule type" value="protein"/>
</dbReference>
<dbReference type="Bgee" id="ENSG00000102897">
    <property type="expression patterns" value="Expressed in sperm and 220 other cell types or tissues"/>
</dbReference>
<dbReference type="ExpressionAtlas" id="O43325">
    <property type="expression patterns" value="baseline and differential"/>
</dbReference>
<dbReference type="GO" id="GO:0030496">
    <property type="term" value="C:midbody"/>
    <property type="evidence" value="ECO:0000314"/>
    <property type="project" value="HPA"/>
</dbReference>
<dbReference type="GO" id="GO:0005739">
    <property type="term" value="C:mitochondrion"/>
    <property type="evidence" value="ECO:0006056"/>
    <property type="project" value="FlyBase"/>
</dbReference>
<dbReference type="GO" id="GO:0005654">
    <property type="term" value="C:nucleoplasm"/>
    <property type="evidence" value="ECO:0000314"/>
    <property type="project" value="HPA"/>
</dbReference>
<dbReference type="CDD" id="cd20261">
    <property type="entry name" value="Complex1_LYR_LYRM1"/>
    <property type="match status" value="1"/>
</dbReference>
<dbReference type="InterPro" id="IPR008011">
    <property type="entry name" value="Complex1_LYR_dom"/>
</dbReference>
<dbReference type="InterPro" id="IPR045294">
    <property type="entry name" value="Complex1_LYR_LYRM1"/>
</dbReference>
<dbReference type="InterPro" id="IPR040330">
    <property type="entry name" value="LYRM1"/>
</dbReference>
<dbReference type="PANTHER" id="PTHR14273">
    <property type="entry name" value="LYR MOTIF-CONTAINING PROTEIN 1"/>
    <property type="match status" value="1"/>
</dbReference>
<dbReference type="PANTHER" id="PTHR14273:SF0">
    <property type="entry name" value="LYR MOTIF-CONTAINING PROTEIN 1"/>
    <property type="match status" value="1"/>
</dbReference>
<dbReference type="Pfam" id="PF05347">
    <property type="entry name" value="Complex1_LYR"/>
    <property type="match status" value="1"/>
</dbReference>
<organism>
    <name type="scientific">Homo sapiens</name>
    <name type="common">Human</name>
    <dbReference type="NCBI Taxonomy" id="9606"/>
    <lineage>
        <taxon>Eukaryota</taxon>
        <taxon>Metazoa</taxon>
        <taxon>Chordata</taxon>
        <taxon>Craniata</taxon>
        <taxon>Vertebrata</taxon>
        <taxon>Euteleostomi</taxon>
        <taxon>Mammalia</taxon>
        <taxon>Eutheria</taxon>
        <taxon>Euarchontoglires</taxon>
        <taxon>Primates</taxon>
        <taxon>Haplorrhini</taxon>
        <taxon>Catarrhini</taxon>
        <taxon>Hominidae</taxon>
        <taxon>Homo</taxon>
    </lineage>
</organism>
<reference key="1">
    <citation type="journal article" date="2004" name="Nat. Genet.">
        <title>Complete sequencing and characterization of 21,243 full-length human cDNAs.</title>
        <authorList>
            <person name="Ota T."/>
            <person name="Suzuki Y."/>
            <person name="Nishikawa T."/>
            <person name="Otsuki T."/>
            <person name="Sugiyama T."/>
            <person name="Irie R."/>
            <person name="Wakamatsu A."/>
            <person name="Hayashi K."/>
            <person name="Sato H."/>
            <person name="Nagai K."/>
            <person name="Kimura K."/>
            <person name="Makita H."/>
            <person name="Sekine M."/>
            <person name="Obayashi M."/>
            <person name="Nishi T."/>
            <person name="Shibahara T."/>
            <person name="Tanaka T."/>
            <person name="Ishii S."/>
            <person name="Yamamoto J."/>
            <person name="Saito K."/>
            <person name="Kawai Y."/>
            <person name="Isono Y."/>
            <person name="Nakamura Y."/>
            <person name="Nagahari K."/>
            <person name="Murakami K."/>
            <person name="Yasuda T."/>
            <person name="Iwayanagi T."/>
            <person name="Wagatsuma M."/>
            <person name="Shiratori A."/>
            <person name="Sudo H."/>
            <person name="Hosoiri T."/>
            <person name="Kaku Y."/>
            <person name="Kodaira H."/>
            <person name="Kondo H."/>
            <person name="Sugawara M."/>
            <person name="Takahashi M."/>
            <person name="Kanda K."/>
            <person name="Yokoi T."/>
            <person name="Furuya T."/>
            <person name="Kikkawa E."/>
            <person name="Omura Y."/>
            <person name="Abe K."/>
            <person name="Kamihara K."/>
            <person name="Katsuta N."/>
            <person name="Sato K."/>
            <person name="Tanikawa M."/>
            <person name="Yamazaki M."/>
            <person name="Ninomiya K."/>
            <person name="Ishibashi T."/>
            <person name="Yamashita H."/>
            <person name="Murakawa K."/>
            <person name="Fujimori K."/>
            <person name="Tanai H."/>
            <person name="Kimata M."/>
            <person name="Watanabe M."/>
            <person name="Hiraoka S."/>
            <person name="Chiba Y."/>
            <person name="Ishida S."/>
            <person name="Ono Y."/>
            <person name="Takiguchi S."/>
            <person name="Watanabe S."/>
            <person name="Yosida M."/>
            <person name="Hotuta T."/>
            <person name="Kusano J."/>
            <person name="Kanehori K."/>
            <person name="Takahashi-Fujii A."/>
            <person name="Hara H."/>
            <person name="Tanase T.-O."/>
            <person name="Nomura Y."/>
            <person name="Togiya S."/>
            <person name="Komai F."/>
            <person name="Hara R."/>
            <person name="Takeuchi K."/>
            <person name="Arita M."/>
            <person name="Imose N."/>
            <person name="Musashino K."/>
            <person name="Yuuki H."/>
            <person name="Oshima A."/>
            <person name="Sasaki N."/>
            <person name="Aotsuka S."/>
            <person name="Yoshikawa Y."/>
            <person name="Matsunawa H."/>
            <person name="Ichihara T."/>
            <person name="Shiohata N."/>
            <person name="Sano S."/>
            <person name="Moriya S."/>
            <person name="Momiyama H."/>
            <person name="Satoh N."/>
            <person name="Takami S."/>
            <person name="Terashima Y."/>
            <person name="Suzuki O."/>
            <person name="Nakagawa S."/>
            <person name="Senoh A."/>
            <person name="Mizoguchi H."/>
            <person name="Goto Y."/>
            <person name="Shimizu F."/>
            <person name="Wakebe H."/>
            <person name="Hishigaki H."/>
            <person name="Watanabe T."/>
            <person name="Sugiyama A."/>
            <person name="Takemoto M."/>
            <person name="Kawakami B."/>
            <person name="Yamazaki M."/>
            <person name="Watanabe K."/>
            <person name="Kumagai A."/>
            <person name="Itakura S."/>
            <person name="Fukuzumi Y."/>
            <person name="Fujimori Y."/>
            <person name="Komiyama M."/>
            <person name="Tashiro H."/>
            <person name="Tanigami A."/>
            <person name="Fujiwara T."/>
            <person name="Ono T."/>
            <person name="Yamada K."/>
            <person name="Fujii Y."/>
            <person name="Ozaki K."/>
            <person name="Hirao M."/>
            <person name="Ohmori Y."/>
            <person name="Kawabata A."/>
            <person name="Hikiji T."/>
            <person name="Kobatake N."/>
            <person name="Inagaki H."/>
            <person name="Ikema Y."/>
            <person name="Okamoto S."/>
            <person name="Okitani R."/>
            <person name="Kawakami T."/>
            <person name="Noguchi S."/>
            <person name="Itoh T."/>
            <person name="Shigeta K."/>
            <person name="Senba T."/>
            <person name="Matsumura K."/>
            <person name="Nakajima Y."/>
            <person name="Mizuno T."/>
            <person name="Morinaga M."/>
            <person name="Sasaki M."/>
            <person name="Togashi T."/>
            <person name="Oyama M."/>
            <person name="Hata H."/>
            <person name="Watanabe M."/>
            <person name="Komatsu T."/>
            <person name="Mizushima-Sugano J."/>
            <person name="Satoh T."/>
            <person name="Shirai Y."/>
            <person name="Takahashi Y."/>
            <person name="Nakagawa K."/>
            <person name="Okumura K."/>
            <person name="Nagase T."/>
            <person name="Nomura N."/>
            <person name="Kikuchi H."/>
            <person name="Masuho Y."/>
            <person name="Yamashita R."/>
            <person name="Nakai K."/>
            <person name="Yada T."/>
            <person name="Nakamura Y."/>
            <person name="Ohara O."/>
            <person name="Isogai T."/>
            <person name="Sugano S."/>
        </authorList>
    </citation>
    <scope>NUCLEOTIDE SEQUENCE [LARGE SCALE MRNA]</scope>
    <source>
        <tissue>Tongue</tissue>
    </source>
</reference>
<reference key="2">
    <citation type="journal article" date="1999" name="Genomics">
        <title>Genome duplications and other features in 12 Mb of DNA sequence from human chromosome 16p and 16q.</title>
        <authorList>
            <person name="Loftus B.J."/>
            <person name="Kim U.-J."/>
            <person name="Sneddon V.P."/>
            <person name="Kalush F."/>
            <person name="Brandon R."/>
            <person name="Fuhrmann J."/>
            <person name="Mason T."/>
            <person name="Crosby M.L."/>
            <person name="Barnstead M."/>
            <person name="Cronin L."/>
            <person name="Mays A.D."/>
            <person name="Cao Y."/>
            <person name="Xu R.X."/>
            <person name="Kang H.-L."/>
            <person name="Mitchell S."/>
            <person name="Eichler E.E."/>
            <person name="Harris P.C."/>
            <person name="Venter J.C."/>
            <person name="Adams M.D."/>
        </authorList>
    </citation>
    <scope>NUCLEOTIDE SEQUENCE [LARGE SCALE GENOMIC DNA]</scope>
</reference>
<reference key="3">
    <citation type="submission" date="2005-07" db="EMBL/GenBank/DDBJ databases">
        <authorList>
            <person name="Mural R.J."/>
            <person name="Istrail S."/>
            <person name="Sutton G.G."/>
            <person name="Florea L."/>
            <person name="Halpern A.L."/>
            <person name="Mobarry C.M."/>
            <person name="Lippert R."/>
            <person name="Walenz B."/>
            <person name="Shatkay H."/>
            <person name="Dew I."/>
            <person name="Miller J.R."/>
            <person name="Flanigan M.J."/>
            <person name="Edwards N.J."/>
            <person name="Bolanos R."/>
            <person name="Fasulo D."/>
            <person name="Halldorsson B.V."/>
            <person name="Hannenhalli S."/>
            <person name="Turner R."/>
            <person name="Yooseph S."/>
            <person name="Lu F."/>
            <person name="Nusskern D.R."/>
            <person name="Shue B.C."/>
            <person name="Zheng X.H."/>
            <person name="Zhong F."/>
            <person name="Delcher A.L."/>
            <person name="Huson D.H."/>
            <person name="Kravitz S.A."/>
            <person name="Mouchard L."/>
            <person name="Reinert K."/>
            <person name="Remington K.A."/>
            <person name="Clark A.G."/>
            <person name="Waterman M.S."/>
            <person name="Eichler E.E."/>
            <person name="Adams M.D."/>
            <person name="Hunkapiller M.W."/>
            <person name="Myers E.W."/>
            <person name="Venter J.C."/>
        </authorList>
    </citation>
    <scope>NUCLEOTIDE SEQUENCE [LARGE SCALE GENOMIC DNA]</scope>
</reference>
<reference key="4">
    <citation type="journal article" date="2004" name="Genome Res.">
        <title>The status, quality, and expansion of the NIH full-length cDNA project: the Mammalian Gene Collection (MGC).</title>
        <authorList>
            <consortium name="The MGC Project Team"/>
        </authorList>
    </citation>
    <scope>NUCLEOTIDE SEQUENCE [LARGE SCALE MRNA]</scope>
    <source>
        <tissue>Colon</tissue>
    </source>
</reference>
<reference key="5">
    <citation type="journal article" date="2009" name="Eur. J. Endocrinol.">
        <title>LYRM1, a novel gene promotes proliferation and inhibits apoptosis of preadipocytes.</title>
        <authorList>
            <person name="Qiu J."/>
            <person name="Gao C.-L."/>
            <person name="Zhang M."/>
            <person name="Chen R.-H."/>
            <person name="Chi X."/>
            <person name="Liu F."/>
            <person name="Zhang C.-M."/>
            <person name="Ji C.-B."/>
            <person name="Chen X.-H."/>
            <person name="Zhao Y.-P."/>
            <person name="Li X.-N."/>
            <person name="Tong M.-L."/>
            <person name="Ni Y.-H."/>
            <person name="Guo X.-R."/>
        </authorList>
    </citation>
    <scope>FUNCTION</scope>
    <scope>SUBCELLULAR LOCATION</scope>
    <scope>TISSUE SPECIFICITY</scope>
</reference>
<reference key="6">
    <citation type="journal article" date="2010" name="Mol. Genet. Metab.">
        <title>Overexpression of LYRM1 induces mitochondrial impairment in 3T3-L1 adipocytes.</title>
        <authorList>
            <person name="Cao X.G."/>
            <person name="Kou C.Z."/>
            <person name="Zhao Y.P."/>
            <person name="Gao C.L."/>
            <person name="Zhu C."/>
            <person name="Zhang C.M."/>
            <person name="Ji C.B."/>
            <person name="Qin D.N."/>
            <person name="Zhang M."/>
            <person name="Guo X.R."/>
        </authorList>
    </citation>
    <scope>POSSIBLE INVOLVEMENT IN OBESITY-ASSOCIATED INSULIN RESISTANCE</scope>
</reference>
<proteinExistence type="evidence at protein level"/>
<sequence length="122" mass="14282">MTTATRQEVLGLYRSIFRLARKWQATSGQMEDTIKEKQYILNEARTLFRKNKNLTDTDLIKQCIDECTARIEIGLHYKIPYPRPIHLPPMGLTPLRGRGLRSQEKLRKLSKPVYLRSHDEVS</sequence>
<name>LYRM1_HUMAN</name>
<gene>
    <name type="primary">LYRM1</name>
</gene>